<evidence type="ECO:0000255" key="1">
    <source>
        <dbReference type="HAMAP-Rule" id="MF_01588"/>
    </source>
</evidence>
<evidence type="ECO:0000256" key="2">
    <source>
        <dbReference type="SAM" id="MobiDB-lite"/>
    </source>
</evidence>
<name>DNLJ_CORDI</name>
<sequence>MTDNFADLRRQWDDLAEQVRHHRDAYYNHTPEISDAEFDQLFRQLQQLEQEHPELAVPESPTLRVGAPVEQSSFDNVEHLERMLSLDNVFDAAELDDWLQRTPSATYLTELKIDGLSIDLVYRSGRLERAATRGDGRVGEDVTANAKVIEDIPHRLQHSDAYPVPELVEIRGEVFIAVEDFALVNEQRQKEGGKPFANPRNAAAGSLRQKDTEAVRKRRLKMICHGIGASEGFEADTQFDAYKALEAWGLPVSPYTKRVHSAQEVQERVTYWAQHRHDATHEMDGLVIKIDSFAEQRALGSTARAPRWAIAYKYPPEEVTTKLLDIQVGVGRTGRVTPFAVMDPVFVAGSTVEMATLHNQTEVKRKGVLIGDTVVIRKAGEVIPEVLGPVVEKRDGSEREFIFPTLCPACGTRLAPQKEDDADWRCPNSQSCPAQLSSRLTYLAGRGAFDIEALGEKGAEDLIASGVLIDEAQLFNLTEDDLKRTKVYTTKAGALNATGEKLLANLESAKHTDLWRVLVALSIRHVGPTAARALAVRYRSLEALRAADVEDIANTEGVGAIIAQSFAQWFDVPWHRNIVEVWADAGVTMADSEADIPDQVLEGLTIVVTGSLVDFSRDSAKEAIVSRGGKASGSVSKKTSYVVVGENAGSKETKARDLGLRILNEDEFKQLLANGTV</sequence>
<keyword id="KW-0227">DNA damage</keyword>
<keyword id="KW-0234">DNA repair</keyword>
<keyword id="KW-0235">DNA replication</keyword>
<keyword id="KW-0436">Ligase</keyword>
<keyword id="KW-0460">Magnesium</keyword>
<keyword id="KW-0464">Manganese</keyword>
<keyword id="KW-0479">Metal-binding</keyword>
<keyword id="KW-0520">NAD</keyword>
<keyword id="KW-1185">Reference proteome</keyword>
<keyword id="KW-0862">Zinc</keyword>
<proteinExistence type="inferred from homology"/>
<comment type="function">
    <text evidence="1">DNA ligase that catalyzes the formation of phosphodiester linkages between 5'-phosphoryl and 3'-hydroxyl groups in double-stranded DNA using NAD as a coenzyme and as the energy source for the reaction. It is essential for DNA replication and repair of damaged DNA.</text>
</comment>
<comment type="catalytic activity">
    <reaction evidence="1">
        <text>NAD(+) + (deoxyribonucleotide)n-3'-hydroxyl + 5'-phospho-(deoxyribonucleotide)m = (deoxyribonucleotide)n+m + AMP + beta-nicotinamide D-nucleotide.</text>
        <dbReference type="EC" id="6.5.1.2"/>
    </reaction>
</comment>
<comment type="cofactor">
    <cofactor evidence="1">
        <name>Mg(2+)</name>
        <dbReference type="ChEBI" id="CHEBI:18420"/>
    </cofactor>
    <cofactor evidence="1">
        <name>Mn(2+)</name>
        <dbReference type="ChEBI" id="CHEBI:29035"/>
    </cofactor>
</comment>
<comment type="similarity">
    <text evidence="1">Belongs to the NAD-dependent DNA ligase family. LigA subfamily.</text>
</comment>
<feature type="chain" id="PRO_0000313205" description="DNA ligase">
    <location>
        <begin position="1"/>
        <end position="677"/>
    </location>
</feature>
<feature type="domain" description="BRCT" evidence="1">
    <location>
        <begin position="596"/>
        <end position="677"/>
    </location>
</feature>
<feature type="region of interest" description="Disordered" evidence="2">
    <location>
        <begin position="189"/>
        <end position="210"/>
    </location>
</feature>
<feature type="active site" description="N6-AMP-lysine intermediate" evidence="1">
    <location>
        <position position="112"/>
    </location>
</feature>
<feature type="binding site" evidence="1">
    <location>
        <begin position="35"/>
        <end position="39"/>
    </location>
    <ligand>
        <name>NAD(+)</name>
        <dbReference type="ChEBI" id="CHEBI:57540"/>
    </ligand>
</feature>
<feature type="binding site" evidence="1">
    <location>
        <begin position="85"/>
        <end position="86"/>
    </location>
    <ligand>
        <name>NAD(+)</name>
        <dbReference type="ChEBI" id="CHEBI:57540"/>
    </ligand>
</feature>
<feature type="binding site" evidence="1">
    <location>
        <position position="110"/>
    </location>
    <ligand>
        <name>NAD(+)</name>
        <dbReference type="ChEBI" id="CHEBI:57540"/>
    </ligand>
</feature>
<feature type="binding site" evidence="1">
    <location>
        <position position="133"/>
    </location>
    <ligand>
        <name>NAD(+)</name>
        <dbReference type="ChEBI" id="CHEBI:57540"/>
    </ligand>
</feature>
<feature type="binding site" evidence="1">
    <location>
        <position position="173"/>
    </location>
    <ligand>
        <name>NAD(+)</name>
        <dbReference type="ChEBI" id="CHEBI:57540"/>
    </ligand>
</feature>
<feature type="binding site" evidence="1">
    <location>
        <position position="289"/>
    </location>
    <ligand>
        <name>NAD(+)</name>
        <dbReference type="ChEBI" id="CHEBI:57540"/>
    </ligand>
</feature>
<feature type="binding site" evidence="1">
    <location>
        <position position="313"/>
    </location>
    <ligand>
        <name>NAD(+)</name>
        <dbReference type="ChEBI" id="CHEBI:57540"/>
    </ligand>
</feature>
<feature type="binding site" evidence="1">
    <location>
        <position position="407"/>
    </location>
    <ligand>
        <name>Zn(2+)</name>
        <dbReference type="ChEBI" id="CHEBI:29105"/>
    </ligand>
</feature>
<feature type="binding site" evidence="1">
    <location>
        <position position="410"/>
    </location>
    <ligand>
        <name>Zn(2+)</name>
        <dbReference type="ChEBI" id="CHEBI:29105"/>
    </ligand>
</feature>
<feature type="binding site" evidence="1">
    <location>
        <position position="426"/>
    </location>
    <ligand>
        <name>Zn(2+)</name>
        <dbReference type="ChEBI" id="CHEBI:29105"/>
    </ligand>
</feature>
<feature type="binding site" evidence="1">
    <location>
        <position position="432"/>
    </location>
    <ligand>
        <name>Zn(2+)</name>
        <dbReference type="ChEBI" id="CHEBI:29105"/>
    </ligand>
</feature>
<protein>
    <recommendedName>
        <fullName evidence="1">DNA ligase</fullName>
        <ecNumber evidence="1">6.5.1.2</ecNumber>
    </recommendedName>
    <alternativeName>
        <fullName evidence="1">Polydeoxyribonucleotide synthase [NAD(+)]</fullName>
    </alternativeName>
</protein>
<dbReference type="EC" id="6.5.1.2" evidence="1"/>
<dbReference type="EMBL" id="BX248357">
    <property type="protein sequence ID" value="CAE49600.1"/>
    <property type="molecule type" value="Genomic_DNA"/>
</dbReference>
<dbReference type="RefSeq" id="WP_010934791.1">
    <property type="nucleotide sequence ID" value="NC_002935.2"/>
</dbReference>
<dbReference type="SMR" id="Q6NHQ4"/>
<dbReference type="STRING" id="257309.DIP1077"/>
<dbReference type="KEGG" id="cdi:DIP1077"/>
<dbReference type="HOGENOM" id="CLU_007764_2_1_11"/>
<dbReference type="Proteomes" id="UP000002198">
    <property type="component" value="Chromosome"/>
</dbReference>
<dbReference type="GO" id="GO:0005829">
    <property type="term" value="C:cytosol"/>
    <property type="evidence" value="ECO:0007669"/>
    <property type="project" value="TreeGrafter"/>
</dbReference>
<dbReference type="GO" id="GO:0003911">
    <property type="term" value="F:DNA ligase (NAD+) activity"/>
    <property type="evidence" value="ECO:0007669"/>
    <property type="project" value="UniProtKB-UniRule"/>
</dbReference>
<dbReference type="GO" id="GO:0046872">
    <property type="term" value="F:metal ion binding"/>
    <property type="evidence" value="ECO:0007669"/>
    <property type="project" value="UniProtKB-KW"/>
</dbReference>
<dbReference type="GO" id="GO:0006281">
    <property type="term" value="P:DNA repair"/>
    <property type="evidence" value="ECO:0007669"/>
    <property type="project" value="UniProtKB-KW"/>
</dbReference>
<dbReference type="GO" id="GO:0006260">
    <property type="term" value="P:DNA replication"/>
    <property type="evidence" value="ECO:0007669"/>
    <property type="project" value="UniProtKB-KW"/>
</dbReference>
<dbReference type="CDD" id="cd17748">
    <property type="entry name" value="BRCT_DNA_ligase_like"/>
    <property type="match status" value="1"/>
</dbReference>
<dbReference type="CDD" id="cd00114">
    <property type="entry name" value="LIGANc"/>
    <property type="match status" value="1"/>
</dbReference>
<dbReference type="FunFam" id="2.40.50.140:FF:000012">
    <property type="entry name" value="DNA ligase"/>
    <property type="match status" value="1"/>
</dbReference>
<dbReference type="FunFam" id="3.30.470.30:FF:000001">
    <property type="entry name" value="DNA ligase"/>
    <property type="match status" value="1"/>
</dbReference>
<dbReference type="FunFam" id="3.40.50.10190:FF:000054">
    <property type="entry name" value="DNA ligase"/>
    <property type="match status" value="1"/>
</dbReference>
<dbReference type="Gene3D" id="6.20.10.30">
    <property type="match status" value="1"/>
</dbReference>
<dbReference type="Gene3D" id="1.10.150.20">
    <property type="entry name" value="5' to 3' exonuclease, C-terminal subdomain"/>
    <property type="match status" value="2"/>
</dbReference>
<dbReference type="Gene3D" id="3.40.50.10190">
    <property type="entry name" value="BRCT domain"/>
    <property type="match status" value="1"/>
</dbReference>
<dbReference type="Gene3D" id="3.30.470.30">
    <property type="entry name" value="DNA ligase/mRNA capping enzyme"/>
    <property type="match status" value="1"/>
</dbReference>
<dbReference type="Gene3D" id="1.10.287.610">
    <property type="entry name" value="Helix hairpin bin"/>
    <property type="match status" value="1"/>
</dbReference>
<dbReference type="Gene3D" id="2.40.50.140">
    <property type="entry name" value="Nucleic acid-binding proteins"/>
    <property type="match status" value="1"/>
</dbReference>
<dbReference type="HAMAP" id="MF_01588">
    <property type="entry name" value="DNA_ligase_A"/>
    <property type="match status" value="1"/>
</dbReference>
<dbReference type="InterPro" id="IPR001357">
    <property type="entry name" value="BRCT_dom"/>
</dbReference>
<dbReference type="InterPro" id="IPR036420">
    <property type="entry name" value="BRCT_dom_sf"/>
</dbReference>
<dbReference type="InterPro" id="IPR041663">
    <property type="entry name" value="DisA/LigA_HHH"/>
</dbReference>
<dbReference type="InterPro" id="IPR001679">
    <property type="entry name" value="DNA_ligase"/>
</dbReference>
<dbReference type="InterPro" id="IPR018239">
    <property type="entry name" value="DNA_ligase_AS"/>
</dbReference>
<dbReference type="InterPro" id="IPR033136">
    <property type="entry name" value="DNA_ligase_CS"/>
</dbReference>
<dbReference type="InterPro" id="IPR013839">
    <property type="entry name" value="DNAligase_adenylation"/>
</dbReference>
<dbReference type="InterPro" id="IPR013840">
    <property type="entry name" value="DNAligase_N"/>
</dbReference>
<dbReference type="InterPro" id="IPR012340">
    <property type="entry name" value="NA-bd_OB-fold"/>
</dbReference>
<dbReference type="InterPro" id="IPR004150">
    <property type="entry name" value="NAD_DNA_ligase_OB"/>
</dbReference>
<dbReference type="InterPro" id="IPR010994">
    <property type="entry name" value="RuvA_2-like"/>
</dbReference>
<dbReference type="InterPro" id="IPR004149">
    <property type="entry name" value="Znf_DNAligase_C4"/>
</dbReference>
<dbReference type="NCBIfam" id="TIGR00575">
    <property type="entry name" value="dnlj"/>
    <property type="match status" value="1"/>
</dbReference>
<dbReference type="NCBIfam" id="NF005932">
    <property type="entry name" value="PRK07956.1"/>
    <property type="match status" value="1"/>
</dbReference>
<dbReference type="PANTHER" id="PTHR23389">
    <property type="entry name" value="CHROMOSOME TRANSMISSION FIDELITY FACTOR 18"/>
    <property type="match status" value="1"/>
</dbReference>
<dbReference type="PANTHER" id="PTHR23389:SF9">
    <property type="entry name" value="DNA LIGASE"/>
    <property type="match status" value="1"/>
</dbReference>
<dbReference type="Pfam" id="PF00533">
    <property type="entry name" value="BRCT"/>
    <property type="match status" value="1"/>
</dbReference>
<dbReference type="Pfam" id="PF01653">
    <property type="entry name" value="DNA_ligase_aden"/>
    <property type="match status" value="1"/>
</dbReference>
<dbReference type="Pfam" id="PF03120">
    <property type="entry name" value="DNA_ligase_OB"/>
    <property type="match status" value="1"/>
</dbReference>
<dbReference type="Pfam" id="PF03119">
    <property type="entry name" value="DNA_ligase_ZBD"/>
    <property type="match status" value="1"/>
</dbReference>
<dbReference type="Pfam" id="PF12826">
    <property type="entry name" value="HHH_2"/>
    <property type="match status" value="1"/>
</dbReference>
<dbReference type="PIRSF" id="PIRSF001604">
    <property type="entry name" value="LigA"/>
    <property type="match status" value="1"/>
</dbReference>
<dbReference type="SMART" id="SM00292">
    <property type="entry name" value="BRCT"/>
    <property type="match status" value="1"/>
</dbReference>
<dbReference type="SMART" id="SM00532">
    <property type="entry name" value="LIGANc"/>
    <property type="match status" value="1"/>
</dbReference>
<dbReference type="SUPFAM" id="SSF52113">
    <property type="entry name" value="BRCT domain"/>
    <property type="match status" value="1"/>
</dbReference>
<dbReference type="SUPFAM" id="SSF56091">
    <property type="entry name" value="DNA ligase/mRNA capping enzyme, catalytic domain"/>
    <property type="match status" value="1"/>
</dbReference>
<dbReference type="SUPFAM" id="SSF50249">
    <property type="entry name" value="Nucleic acid-binding proteins"/>
    <property type="match status" value="1"/>
</dbReference>
<dbReference type="SUPFAM" id="SSF47781">
    <property type="entry name" value="RuvA domain 2-like"/>
    <property type="match status" value="1"/>
</dbReference>
<dbReference type="PROSITE" id="PS50172">
    <property type="entry name" value="BRCT"/>
    <property type="match status" value="1"/>
</dbReference>
<dbReference type="PROSITE" id="PS01055">
    <property type="entry name" value="DNA_LIGASE_N1"/>
    <property type="match status" value="1"/>
</dbReference>
<dbReference type="PROSITE" id="PS01056">
    <property type="entry name" value="DNA_LIGASE_N2"/>
    <property type="match status" value="1"/>
</dbReference>
<reference key="1">
    <citation type="journal article" date="2003" name="Nucleic Acids Res.">
        <title>The complete genome sequence and analysis of Corynebacterium diphtheriae NCTC13129.</title>
        <authorList>
            <person name="Cerdeno-Tarraga A.-M."/>
            <person name="Efstratiou A."/>
            <person name="Dover L.G."/>
            <person name="Holden M.T.G."/>
            <person name="Pallen M.J."/>
            <person name="Bentley S.D."/>
            <person name="Besra G.S."/>
            <person name="Churcher C.M."/>
            <person name="James K.D."/>
            <person name="De Zoysa A."/>
            <person name="Chillingworth T."/>
            <person name="Cronin A."/>
            <person name="Dowd L."/>
            <person name="Feltwell T."/>
            <person name="Hamlin N."/>
            <person name="Holroyd S."/>
            <person name="Jagels K."/>
            <person name="Moule S."/>
            <person name="Quail M.A."/>
            <person name="Rabbinowitsch E."/>
            <person name="Rutherford K.M."/>
            <person name="Thomson N.R."/>
            <person name="Unwin L."/>
            <person name="Whitehead S."/>
            <person name="Barrell B.G."/>
            <person name="Parkhill J."/>
        </authorList>
    </citation>
    <scope>NUCLEOTIDE SEQUENCE [LARGE SCALE GENOMIC DNA]</scope>
    <source>
        <strain>ATCC 700971 / NCTC 13129 / Biotype gravis</strain>
    </source>
</reference>
<gene>
    <name evidence="1" type="primary">ligA</name>
    <name type="ordered locus">DIP1077</name>
</gene>
<organism>
    <name type="scientific">Corynebacterium diphtheriae (strain ATCC 700971 / NCTC 13129 / Biotype gravis)</name>
    <dbReference type="NCBI Taxonomy" id="257309"/>
    <lineage>
        <taxon>Bacteria</taxon>
        <taxon>Bacillati</taxon>
        <taxon>Actinomycetota</taxon>
        <taxon>Actinomycetes</taxon>
        <taxon>Mycobacteriales</taxon>
        <taxon>Corynebacteriaceae</taxon>
        <taxon>Corynebacterium</taxon>
    </lineage>
</organism>
<accession>Q6NHQ4</accession>